<protein>
    <recommendedName>
        <fullName>Myeloid differentiation primary response protein MyD88</fullName>
    </recommendedName>
</protein>
<feature type="chain" id="PRO_0000393134" description="Myeloid differentiation primary response protein MyD88">
    <location>
        <begin position="1"/>
        <end position="296"/>
    </location>
</feature>
<feature type="domain" description="Death" evidence="4">
    <location>
        <begin position="32"/>
        <end position="109"/>
    </location>
</feature>
<feature type="domain" description="TIR" evidence="5">
    <location>
        <begin position="159"/>
        <end position="293"/>
    </location>
</feature>
<feature type="region of interest" description="Intermediate domain" evidence="1">
    <location>
        <begin position="110"/>
        <end position="155"/>
    </location>
</feature>
<feature type="modified residue" description="Phosphoserine" evidence="3">
    <location>
        <position position="244"/>
    </location>
</feature>
<sequence length="296" mass="33256">MAAGGPGAGSAAPISSTSSLPLAALNMRVRRRLSLFLNVRTQVAADWTALAEEMDFEYLEIRQLETHADPTGRLLDAWQGRPGASVGRLLELLTKLGRDDVLLELGPSIEEDCQKYILKQQQEEAEKPLQVAAVDSSVPRTAELAGITTLDDPLGHMPERFDAFICYCPSDIQFVQEMIRQLEQTNYRLKLCVSDRDVLPGTCVWSIASELIEKRCRRMVVVVSDDYLQSKECDFQTKFALSLSPGAHQKRLIPIKYKAMKKEFPSILRFITVCDYTNPCTKSWFWTRLAKALSLP</sequence>
<name>MYD88_PANPA</name>
<organism>
    <name type="scientific">Pan paniscus</name>
    <name type="common">Pygmy chimpanzee</name>
    <name type="synonym">Bonobo</name>
    <dbReference type="NCBI Taxonomy" id="9597"/>
    <lineage>
        <taxon>Eukaryota</taxon>
        <taxon>Metazoa</taxon>
        <taxon>Chordata</taxon>
        <taxon>Craniata</taxon>
        <taxon>Vertebrata</taxon>
        <taxon>Euteleostomi</taxon>
        <taxon>Mammalia</taxon>
        <taxon>Eutheria</taxon>
        <taxon>Euarchontoglires</taxon>
        <taxon>Primates</taxon>
        <taxon>Haplorrhini</taxon>
        <taxon>Catarrhini</taxon>
        <taxon>Hominidae</taxon>
        <taxon>Pan</taxon>
    </lineage>
</organism>
<comment type="function">
    <text evidence="2 3">Adapter protein involved in the Toll-like receptor and IL-1 receptor signaling pathway in the innate immune response. Acts via IRAK1, IRAK2, IRF7 and TRAF6, leading to NF-kappa-B activation, cytokine secretion and the inflammatory response. Increases IL-8 transcription. Involved in IL-18-mediated signaling pathway. Activates IRF1 resulting in its rapid migration into the nucleus to mediate an efficient induction of IFN-beta, NOS2/INOS, and IL12A genes. Upon TLR8 activation by GU-rich single-stranded RNA (GU-rich RNA) derived from viruses, induces IL1B release through NLRP3 inflammasome activation (By similarity). MyD88-mediated signaling in intestinal epithelial cells is crucial for maintenance of gut homeostasis and controls the expression of the antimicrobial lectin REG3G in the small intestine (By similarity).</text>
</comment>
<comment type="subunit">
    <text evidence="3">Homodimer. Also forms heterodimers with TIRAP. Binds to TLR2, TLR4, IRAK1, IRAK2 and IRAK4 via their respective TIR domains. Interacts with IL18R1. Interacts with BMX, IL1RL1, IKBKE and IRF7. Interacts with LRRFIP1 and LRRFIP2; this interaction positively regulates Toll-like receptor (TLR) signaling in response to agonist. Interacts with FLII. LRRFIP1 and LRRFIP2 compete with FLII for MYD88-binding. Interacts with IRF1. Upon IL1B treatment, forms a complex with PELI1, IRAK1, IRAK4 and TRAF6; this complex recruits MAP3K7/TAK1, TAB1 and TAB2 to mediate NF-kappa-B activation. Direct binding of SMAD6 to PELI1 prevents the complex formation and hence negatively regulates IL1R-TLR signaling and eventually NF-kappa-B-mediated gene expression. May interact with PIK3AP1. Interacts (via TIR domain) with DHX9 (via H2A and OB-fold regions); this interaction is direct. Interacts with OTUD4 deubiquitinase; the interaction is direct.</text>
</comment>
<comment type="subcellular location">
    <subcellularLocation>
        <location evidence="3">Cytoplasm</location>
    </subcellularLocation>
    <subcellularLocation>
        <location evidence="3">Nucleus</location>
    </subcellularLocation>
</comment>
<comment type="domain">
    <text evidence="2">The intermediate domain (ID) is required for the phosphorylation and activation of IRAK.</text>
</comment>
<comment type="PTM">
    <text evidence="3">Ubiquitinated; undergoes 'Lys-63'-linked polyubiquitination. OTUD4 specifically hydrolyzes 'Lys-63'-linked polyubiquitinated MYD88. Deubiquitinated by USP3 that cleaves 'Lys-63'-linked ubiquitin chains leading to inhibition of MYD88-induced NF-kappa-B signaling.</text>
</comment>
<keyword id="KW-0963">Cytoplasm</keyword>
<keyword id="KW-0391">Immunity</keyword>
<keyword id="KW-0395">Inflammatory response</keyword>
<keyword id="KW-0399">Innate immunity</keyword>
<keyword id="KW-0539">Nucleus</keyword>
<keyword id="KW-0597">Phosphoprotein</keyword>
<keyword id="KW-1185">Reference proteome</keyword>
<keyword id="KW-0832">Ubl conjugation</keyword>
<reference key="1">
    <citation type="journal article" date="2008" name="Immunogenetics">
        <title>Natural selection in the TLR-related genes in the course of primate evolution.</title>
        <authorList>
            <person name="Nakajima T."/>
            <person name="Ohtani H."/>
            <person name="Satta Y."/>
            <person name="Uno Y."/>
            <person name="Akari H."/>
            <person name="Ishida T."/>
            <person name="Kimura A."/>
        </authorList>
    </citation>
    <scope>NUCLEOTIDE SEQUENCE [MRNA]</scope>
</reference>
<dbReference type="EMBL" id="AB446472">
    <property type="protein sequence ID" value="BAG55249.1"/>
    <property type="molecule type" value="mRNA"/>
</dbReference>
<dbReference type="RefSeq" id="NP_001266118.1">
    <property type="nucleotide sequence ID" value="NM_001279189.1"/>
</dbReference>
<dbReference type="BMRB" id="B3Y679"/>
<dbReference type="SMR" id="B3Y679"/>
<dbReference type="STRING" id="9597.ENSPPAP00000029064"/>
<dbReference type="GeneID" id="100996159"/>
<dbReference type="KEGG" id="pps:100996159"/>
<dbReference type="CTD" id="4615"/>
<dbReference type="eggNOG" id="ENOG502QWKI">
    <property type="taxonomic scope" value="Eukaryota"/>
</dbReference>
<dbReference type="OrthoDB" id="10742at9604"/>
<dbReference type="Proteomes" id="UP000240080">
    <property type="component" value="Unplaced"/>
</dbReference>
<dbReference type="GO" id="GO:0005737">
    <property type="term" value="C:cytoplasm"/>
    <property type="evidence" value="ECO:0007669"/>
    <property type="project" value="UniProtKB-SubCell"/>
</dbReference>
<dbReference type="GO" id="GO:0005634">
    <property type="term" value="C:nucleus"/>
    <property type="evidence" value="ECO:0007669"/>
    <property type="project" value="UniProtKB-SubCell"/>
</dbReference>
<dbReference type="GO" id="GO:0005886">
    <property type="term" value="C:plasma membrane"/>
    <property type="evidence" value="ECO:0007669"/>
    <property type="project" value="TreeGrafter"/>
</dbReference>
<dbReference type="GO" id="GO:0070976">
    <property type="term" value="F:TIR domain binding"/>
    <property type="evidence" value="ECO:0007669"/>
    <property type="project" value="InterPro"/>
</dbReference>
<dbReference type="GO" id="GO:0035325">
    <property type="term" value="F:Toll-like receptor binding"/>
    <property type="evidence" value="ECO:0007669"/>
    <property type="project" value="TreeGrafter"/>
</dbReference>
<dbReference type="GO" id="GO:0050830">
    <property type="term" value="P:defense response to Gram-positive bacterium"/>
    <property type="evidence" value="ECO:0000250"/>
    <property type="project" value="UniProtKB"/>
</dbReference>
<dbReference type="GO" id="GO:0051607">
    <property type="term" value="P:defense response to virus"/>
    <property type="evidence" value="ECO:0000250"/>
    <property type="project" value="UniProtKB"/>
</dbReference>
<dbReference type="GO" id="GO:0006954">
    <property type="term" value="P:inflammatory response"/>
    <property type="evidence" value="ECO:0007669"/>
    <property type="project" value="UniProtKB-KW"/>
</dbReference>
<dbReference type="GO" id="GO:0045087">
    <property type="term" value="P:innate immune response"/>
    <property type="evidence" value="ECO:0007669"/>
    <property type="project" value="UniProtKB-KW"/>
</dbReference>
<dbReference type="GO" id="GO:0002755">
    <property type="term" value="P:MyD88-dependent toll-like receptor signaling pathway"/>
    <property type="evidence" value="ECO:0007669"/>
    <property type="project" value="InterPro"/>
</dbReference>
<dbReference type="GO" id="GO:0043123">
    <property type="term" value="P:positive regulation of canonical NF-kappaB signal transduction"/>
    <property type="evidence" value="ECO:0007669"/>
    <property type="project" value="InterPro"/>
</dbReference>
<dbReference type="GO" id="GO:0032731">
    <property type="term" value="P:positive regulation of interleukin-1 beta production"/>
    <property type="evidence" value="ECO:0000250"/>
    <property type="project" value="UniProtKB"/>
</dbReference>
<dbReference type="GO" id="GO:1900227">
    <property type="term" value="P:positive regulation of NLRP3 inflammasome complex assembly"/>
    <property type="evidence" value="ECO:0000250"/>
    <property type="project" value="UniProtKB"/>
</dbReference>
<dbReference type="GO" id="GO:0008063">
    <property type="term" value="P:Toll signaling pathway"/>
    <property type="evidence" value="ECO:0007669"/>
    <property type="project" value="TreeGrafter"/>
</dbReference>
<dbReference type="GO" id="GO:0034142">
    <property type="term" value="P:toll-like receptor 4 signaling pathway"/>
    <property type="evidence" value="ECO:0007669"/>
    <property type="project" value="TreeGrafter"/>
</dbReference>
<dbReference type="GO" id="GO:0034158">
    <property type="term" value="P:toll-like receptor 8 signaling pathway"/>
    <property type="evidence" value="ECO:0000250"/>
    <property type="project" value="UniProtKB"/>
</dbReference>
<dbReference type="CDD" id="cd08312">
    <property type="entry name" value="Death_MyD88"/>
    <property type="match status" value="1"/>
</dbReference>
<dbReference type="FunFam" id="1.10.533.10:FF:000029">
    <property type="entry name" value="Myeloid differentiation primary response protein MyD88"/>
    <property type="match status" value="1"/>
</dbReference>
<dbReference type="FunFam" id="3.40.50.10140:FF:000005">
    <property type="entry name" value="Myeloid differentiation primary response protein MyD88"/>
    <property type="match status" value="1"/>
</dbReference>
<dbReference type="Gene3D" id="1.10.533.10">
    <property type="entry name" value="Death Domain, Fas"/>
    <property type="match status" value="1"/>
</dbReference>
<dbReference type="Gene3D" id="3.40.50.10140">
    <property type="entry name" value="Toll/interleukin-1 receptor homology (TIR) domain"/>
    <property type="match status" value="1"/>
</dbReference>
<dbReference type="InterPro" id="IPR011029">
    <property type="entry name" value="DEATH-like_dom_sf"/>
</dbReference>
<dbReference type="InterPro" id="IPR000488">
    <property type="entry name" value="Death_dom"/>
</dbReference>
<dbReference type="InterPro" id="IPR034249">
    <property type="entry name" value="MyD88_Death"/>
</dbReference>
<dbReference type="InterPro" id="IPR017281">
    <property type="entry name" value="Myelin_different_resp_MyD88"/>
</dbReference>
<dbReference type="InterPro" id="IPR000157">
    <property type="entry name" value="TIR_dom"/>
</dbReference>
<dbReference type="InterPro" id="IPR035897">
    <property type="entry name" value="Toll_tir_struct_dom_sf"/>
</dbReference>
<dbReference type="PANTHER" id="PTHR15079">
    <property type="entry name" value="MYD88"/>
    <property type="match status" value="1"/>
</dbReference>
<dbReference type="PANTHER" id="PTHR15079:SF3">
    <property type="entry name" value="MYELOID DIFFERENTIATION PRIMARY RESPONSE PROTEIN MYD88"/>
    <property type="match status" value="1"/>
</dbReference>
<dbReference type="Pfam" id="PF00531">
    <property type="entry name" value="Death"/>
    <property type="match status" value="1"/>
</dbReference>
<dbReference type="Pfam" id="PF13676">
    <property type="entry name" value="TIR_2"/>
    <property type="match status" value="1"/>
</dbReference>
<dbReference type="PIRSF" id="PIRSF037756">
    <property type="entry name" value="MyD88"/>
    <property type="match status" value="1"/>
</dbReference>
<dbReference type="SMART" id="SM00005">
    <property type="entry name" value="DEATH"/>
    <property type="match status" value="1"/>
</dbReference>
<dbReference type="SMART" id="SM00255">
    <property type="entry name" value="TIR"/>
    <property type="match status" value="1"/>
</dbReference>
<dbReference type="SUPFAM" id="SSF47986">
    <property type="entry name" value="DEATH domain"/>
    <property type="match status" value="1"/>
</dbReference>
<dbReference type="SUPFAM" id="SSF52200">
    <property type="entry name" value="Toll/Interleukin receptor TIR domain"/>
    <property type="match status" value="1"/>
</dbReference>
<dbReference type="PROSITE" id="PS50017">
    <property type="entry name" value="DEATH_DOMAIN"/>
    <property type="match status" value="1"/>
</dbReference>
<dbReference type="PROSITE" id="PS50104">
    <property type="entry name" value="TIR"/>
    <property type="match status" value="1"/>
</dbReference>
<proteinExistence type="evidence at transcript level"/>
<evidence type="ECO:0000250" key="1"/>
<evidence type="ECO:0000250" key="2">
    <source>
        <dbReference type="UniProtKB" id="P22366"/>
    </source>
</evidence>
<evidence type="ECO:0000250" key="3">
    <source>
        <dbReference type="UniProtKB" id="Q99836"/>
    </source>
</evidence>
<evidence type="ECO:0000255" key="4">
    <source>
        <dbReference type="PROSITE-ProRule" id="PRU00064"/>
    </source>
</evidence>
<evidence type="ECO:0000255" key="5">
    <source>
        <dbReference type="PROSITE-ProRule" id="PRU00204"/>
    </source>
</evidence>
<accession>B3Y679</accession>
<gene>
    <name type="primary">MYD88</name>
</gene>